<name>YTFT_ECOLI</name>
<protein>
    <recommendedName>
        <fullName evidence="3">Galactofuranose transporter permease protein YtfT</fullName>
    </recommendedName>
</protein>
<dbReference type="EMBL" id="U14003">
    <property type="protein sequence ID" value="AAA97127.1"/>
    <property type="molecule type" value="Genomic_DNA"/>
</dbReference>
<dbReference type="EMBL" id="U00096">
    <property type="protein sequence ID" value="AAC77187.3"/>
    <property type="molecule type" value="Genomic_DNA"/>
</dbReference>
<dbReference type="EMBL" id="AP009048">
    <property type="protein sequence ID" value="BAE78230.1"/>
    <property type="status" value="ALT_INIT"/>
    <property type="molecule type" value="Genomic_DNA"/>
</dbReference>
<dbReference type="PIR" id="S56456">
    <property type="entry name" value="S56456"/>
</dbReference>
<dbReference type="RefSeq" id="NP_418651.3">
    <property type="nucleotide sequence ID" value="NC_000913.3"/>
</dbReference>
<dbReference type="BioGRID" id="4259314">
    <property type="interactions" value="8"/>
</dbReference>
<dbReference type="BioGRID" id="853034">
    <property type="interactions" value="1"/>
</dbReference>
<dbReference type="ComplexPortal" id="CPX-4323">
    <property type="entry name" value="Galactofuranose ABC transporter complex"/>
</dbReference>
<dbReference type="DIP" id="DIP-12946N"/>
<dbReference type="FunCoup" id="P39328">
    <property type="interactions" value="229"/>
</dbReference>
<dbReference type="IntAct" id="P39328">
    <property type="interactions" value="1"/>
</dbReference>
<dbReference type="STRING" id="511145.b4230"/>
<dbReference type="TCDB" id="3.A.1.2.25">
    <property type="family name" value="the atp-binding cassette (abc) superfamily"/>
</dbReference>
<dbReference type="PaxDb" id="511145-b4230"/>
<dbReference type="EnsemblBacteria" id="AAC77187">
    <property type="protein sequence ID" value="AAC77187"/>
    <property type="gene ID" value="b4230"/>
</dbReference>
<dbReference type="GeneID" id="948743"/>
<dbReference type="KEGG" id="ecj:JW5753"/>
<dbReference type="KEGG" id="eco:b4230"/>
<dbReference type="PATRIC" id="fig|511145.12.peg.4361"/>
<dbReference type="EchoBASE" id="EB2411"/>
<dbReference type="eggNOG" id="COG1172">
    <property type="taxonomic scope" value="Bacteria"/>
</dbReference>
<dbReference type="HOGENOM" id="CLU_028880_3_0_6"/>
<dbReference type="InParanoid" id="P39328"/>
<dbReference type="OMA" id="VWNGFLV"/>
<dbReference type="PhylomeDB" id="P39328"/>
<dbReference type="BioCyc" id="EcoCyc:YTFT-MONOMER"/>
<dbReference type="BioCyc" id="MetaCyc:YTFT-MONOMER"/>
<dbReference type="PRO" id="PR:P39328"/>
<dbReference type="Proteomes" id="UP000000625">
    <property type="component" value="Chromosome"/>
</dbReference>
<dbReference type="GO" id="GO:0055052">
    <property type="term" value="C:ATP-binding cassette (ABC) transporter complex, substrate-binding subunit-containing"/>
    <property type="evidence" value="ECO:0000303"/>
    <property type="project" value="ComplexPortal"/>
</dbReference>
<dbReference type="GO" id="GO:0005886">
    <property type="term" value="C:plasma membrane"/>
    <property type="evidence" value="ECO:0000314"/>
    <property type="project" value="EcoCyc"/>
</dbReference>
<dbReference type="GO" id="GO:0022857">
    <property type="term" value="F:transmembrane transporter activity"/>
    <property type="evidence" value="ECO:0007669"/>
    <property type="project" value="InterPro"/>
</dbReference>
<dbReference type="GO" id="GO:0140271">
    <property type="term" value="P:hexose import across plasma membrane"/>
    <property type="evidence" value="ECO:0000303"/>
    <property type="project" value="ComplexPortal"/>
</dbReference>
<dbReference type="CDD" id="cd06579">
    <property type="entry name" value="TM_PBP1_transp_AraH_like"/>
    <property type="match status" value="1"/>
</dbReference>
<dbReference type="InterPro" id="IPR001851">
    <property type="entry name" value="ABC_transp_permease"/>
</dbReference>
<dbReference type="InterPro" id="IPR053777">
    <property type="entry name" value="YtfT"/>
</dbReference>
<dbReference type="NCBIfam" id="NF041862">
    <property type="entry name" value="YtfT_transport"/>
    <property type="match status" value="1"/>
</dbReference>
<dbReference type="PANTHER" id="PTHR32196">
    <property type="entry name" value="ABC TRANSPORTER PERMEASE PROTEIN YPHD-RELATED-RELATED"/>
    <property type="match status" value="1"/>
</dbReference>
<dbReference type="PANTHER" id="PTHR32196:SF19">
    <property type="entry name" value="GALACTOFURANOSE TRANSPORTER PERMEASE PROTEIN YTFT"/>
    <property type="match status" value="1"/>
</dbReference>
<dbReference type="Pfam" id="PF02653">
    <property type="entry name" value="BPD_transp_2"/>
    <property type="match status" value="1"/>
</dbReference>
<comment type="function">
    <text evidence="3 4">Part of the ABC transporter complex YtfQRT-YjfF involved in galactofuranose transport (Probable). Probably responsible for the translocation of the substrate across the membrane (Probable).</text>
</comment>
<comment type="subunit">
    <text evidence="4">The complex is composed of two ATP-binding proteins (YtfR), two transmembrane proteins (YtfT and YjfF) and a solute-binding protein (YtfQ).</text>
</comment>
<comment type="interaction">
    <interactant intactId="EBI-554774">
        <id>P39328</id>
    </interactant>
    <interactant intactId="EBI-554607">
        <id>P17952</id>
        <label>murC</label>
    </interactant>
    <organismsDiffer>false</organismsDiffer>
    <experiments>3</experiments>
</comment>
<comment type="subcellular location">
    <subcellularLocation>
        <location evidence="2">Cell inner membrane</location>
        <topology evidence="1">Multi-pass membrane protein</topology>
    </subcellularLocation>
</comment>
<comment type="similarity">
    <text evidence="3">Belongs to the binding-protein-dependent transport system permease family. AraH/RbsC subfamily.</text>
</comment>
<comment type="sequence caution" evidence="3">
    <conflict type="erroneous initiation">
        <sequence resource="EMBL-CDS" id="BAE78230"/>
    </conflict>
</comment>
<reference key="1">
    <citation type="journal article" date="1995" name="Nucleic Acids Res.">
        <title>Analysis of the Escherichia coli genome VI: DNA sequence of the region from 92.8 through 100 minutes.</title>
        <authorList>
            <person name="Burland V.D."/>
            <person name="Plunkett G. III"/>
            <person name="Sofia H.J."/>
            <person name="Daniels D.L."/>
            <person name="Blattner F.R."/>
        </authorList>
    </citation>
    <scope>NUCLEOTIDE SEQUENCE [LARGE SCALE GENOMIC DNA]</scope>
    <source>
        <strain>K12 / MG1655 / ATCC 47076</strain>
    </source>
</reference>
<reference key="2">
    <citation type="journal article" date="1997" name="Science">
        <title>The complete genome sequence of Escherichia coli K-12.</title>
        <authorList>
            <person name="Blattner F.R."/>
            <person name="Plunkett G. III"/>
            <person name="Bloch C.A."/>
            <person name="Perna N.T."/>
            <person name="Burland V."/>
            <person name="Riley M."/>
            <person name="Collado-Vides J."/>
            <person name="Glasner J.D."/>
            <person name="Rode C.K."/>
            <person name="Mayhew G.F."/>
            <person name="Gregor J."/>
            <person name="Davis N.W."/>
            <person name="Kirkpatrick H.A."/>
            <person name="Goeden M.A."/>
            <person name="Rose D.J."/>
            <person name="Mau B."/>
            <person name="Shao Y."/>
        </authorList>
    </citation>
    <scope>NUCLEOTIDE SEQUENCE [LARGE SCALE GENOMIC DNA]</scope>
    <source>
        <strain>K12 / MG1655 / ATCC 47076</strain>
    </source>
</reference>
<reference key="3">
    <citation type="journal article" date="2006" name="Mol. Syst. Biol.">
        <title>Highly accurate genome sequences of Escherichia coli K-12 strains MG1655 and W3110.</title>
        <authorList>
            <person name="Hayashi K."/>
            <person name="Morooka N."/>
            <person name="Yamamoto Y."/>
            <person name="Fujita K."/>
            <person name="Isono K."/>
            <person name="Choi S."/>
            <person name="Ohtsubo E."/>
            <person name="Baba T."/>
            <person name="Wanner B.L."/>
            <person name="Mori H."/>
            <person name="Horiuchi T."/>
        </authorList>
    </citation>
    <scope>NUCLEOTIDE SEQUENCE [LARGE SCALE GENOMIC DNA]</scope>
    <source>
        <strain>K12 / W3110 / ATCC 27325 / DSM 5911</strain>
    </source>
</reference>
<reference key="4">
    <citation type="journal article" date="2005" name="Science">
        <title>Global topology analysis of the Escherichia coli inner membrane proteome.</title>
        <authorList>
            <person name="Daley D.O."/>
            <person name="Rapp M."/>
            <person name="Granseth E."/>
            <person name="Melen K."/>
            <person name="Drew D."/>
            <person name="von Heijne G."/>
        </authorList>
    </citation>
    <scope>SUBCELLULAR LOCATION</scope>
    <scope>TOPOLOGY [LARGE SCALE ANALYSIS]</scope>
    <source>
        <strain>K12 / MG1655 / ATCC 47076</strain>
    </source>
</reference>
<reference key="5">
    <citation type="journal article" date="2009" name="J. Biol. Chem.">
        <title>Furanose-specific sugar transport: characterization of a bacterial galactofuranose-binding protein.</title>
        <authorList>
            <person name="Horler R.S."/>
            <person name="Muller A."/>
            <person name="Williamson D.C."/>
            <person name="Potts J.R."/>
            <person name="Wilson K.S."/>
            <person name="Thomas G.H."/>
        </authorList>
    </citation>
    <scope>FUNCTION</scope>
    <scope>SUBUNIT</scope>
    <source>
        <strain>K12</strain>
    </source>
</reference>
<gene>
    <name type="primary">ytfT</name>
    <name type="ordered locus">b4230</name>
    <name type="ordered locus">JW5753</name>
</gene>
<sequence length="341" mass="35659">MMPQSLPDTTTPKRRFRWPTGMPQLVALLLVLLVDSLVAPHFWQVVLQDGRLFGSPIDILNRAAPVALLAIGMTLVIATGGIDLSVGAVMAIAGATTAAMTVAGFSLPIVLLSALGTGILAGLWNGILVAILKIQPFVATLILMVAGRGVAQLITAGQIVTFNSPDLSWFGSGSLLFLPTPVIIAVLTLILFWLLTRKTALGMFIEAVGINIRAAKNAGVNTRIIVMLTYVLSGLCAAIAGIIVAADIRGADANNAGLWLELDAILAVVIGGGSLMGGRFNLLLSVVGALIIQGMNTGILLSGFPPEMNQVVKAVVVLCVLIVQSQRFISLIKGVRSRDKT</sequence>
<evidence type="ECO:0000255" key="1"/>
<evidence type="ECO:0000269" key="2">
    <source>
    </source>
</evidence>
<evidence type="ECO:0000305" key="3"/>
<evidence type="ECO:0000305" key="4">
    <source>
    </source>
</evidence>
<accession>P39328</accession>
<accession>Q2M676</accession>
<feature type="chain" id="PRO_0000060265" description="Galactofuranose transporter permease protein YtfT">
    <location>
        <begin position="1"/>
        <end position="341"/>
    </location>
</feature>
<feature type="topological domain" description="Cytoplasmic" evidence="3">
    <location>
        <begin position="1"/>
        <end position="25"/>
    </location>
</feature>
<feature type="transmembrane region" description="Helical" evidence="1">
    <location>
        <begin position="26"/>
        <end position="46"/>
    </location>
</feature>
<feature type="topological domain" description="Periplasmic" evidence="3">
    <location>
        <begin position="47"/>
        <end position="65"/>
    </location>
</feature>
<feature type="transmembrane region" description="Helical" evidence="1">
    <location>
        <begin position="66"/>
        <end position="86"/>
    </location>
</feature>
<feature type="transmembrane region" description="Helical" evidence="1">
    <location>
        <begin position="87"/>
        <end position="107"/>
    </location>
</feature>
<feature type="topological domain" description="Periplasmic" evidence="3">
    <location>
        <position position="108"/>
    </location>
</feature>
<feature type="transmembrane region" description="Helical" evidence="1">
    <location>
        <begin position="109"/>
        <end position="129"/>
    </location>
</feature>
<feature type="topological domain" description="Cytoplasmic" evidence="3">
    <location>
        <begin position="130"/>
        <end position="136"/>
    </location>
</feature>
<feature type="transmembrane region" description="Helical" evidence="1">
    <location>
        <begin position="137"/>
        <end position="157"/>
    </location>
</feature>
<feature type="topological domain" description="Periplasmic" evidence="3">
    <location>
        <begin position="158"/>
        <end position="174"/>
    </location>
</feature>
<feature type="transmembrane region" description="Helical" evidence="1">
    <location>
        <begin position="175"/>
        <end position="195"/>
    </location>
</feature>
<feature type="topological domain" description="Cytoplasmic" evidence="3">
    <location>
        <begin position="196"/>
        <end position="223"/>
    </location>
</feature>
<feature type="transmembrane region" description="Helical" evidence="1">
    <location>
        <begin position="224"/>
        <end position="244"/>
    </location>
</feature>
<feature type="topological domain" description="Periplasmic" evidence="3">
    <location>
        <begin position="245"/>
        <end position="255"/>
    </location>
</feature>
<feature type="transmembrane region" description="Helical" evidence="1">
    <location>
        <begin position="256"/>
        <end position="276"/>
    </location>
</feature>
<feature type="topological domain" description="Cytoplasmic" evidence="3">
    <location>
        <begin position="277"/>
        <end position="281"/>
    </location>
</feature>
<feature type="transmembrane region" description="Helical" evidence="1">
    <location>
        <begin position="282"/>
        <end position="302"/>
    </location>
</feature>
<feature type="transmembrane region" description="Helical" evidence="1">
    <location>
        <begin position="303"/>
        <end position="323"/>
    </location>
</feature>
<feature type="topological domain" description="Cytoplasmic" evidence="2">
    <location>
        <begin position="324"/>
        <end position="341"/>
    </location>
</feature>
<keyword id="KW-0997">Cell inner membrane</keyword>
<keyword id="KW-1003">Cell membrane</keyword>
<keyword id="KW-0472">Membrane</keyword>
<keyword id="KW-1185">Reference proteome</keyword>
<keyword id="KW-0762">Sugar transport</keyword>
<keyword id="KW-0812">Transmembrane</keyword>
<keyword id="KW-1133">Transmembrane helix</keyword>
<keyword id="KW-0813">Transport</keyword>
<proteinExistence type="evidence at protein level"/>
<organism>
    <name type="scientific">Escherichia coli (strain K12)</name>
    <dbReference type="NCBI Taxonomy" id="83333"/>
    <lineage>
        <taxon>Bacteria</taxon>
        <taxon>Pseudomonadati</taxon>
        <taxon>Pseudomonadota</taxon>
        <taxon>Gammaproteobacteria</taxon>
        <taxon>Enterobacterales</taxon>
        <taxon>Enterobacteriaceae</taxon>
        <taxon>Escherichia</taxon>
    </lineage>
</organism>